<proteinExistence type="inferred from homology"/>
<dbReference type="EC" id="6.3.1.1" evidence="1"/>
<dbReference type="EMBL" id="AE000520">
    <property type="protein sequence ID" value="AAC26560.1"/>
    <property type="molecule type" value="Genomic_DNA"/>
</dbReference>
<dbReference type="PIR" id="H71309">
    <property type="entry name" value="H71309"/>
</dbReference>
<dbReference type="RefSeq" id="WP_010882003.1">
    <property type="nucleotide sequence ID" value="NC_021490.2"/>
</dbReference>
<dbReference type="SMR" id="O83567"/>
<dbReference type="STRING" id="243276.TP_0556"/>
<dbReference type="EnsemblBacteria" id="AAC26560">
    <property type="protein sequence ID" value="AAC26560"/>
    <property type="gene ID" value="TP_0556"/>
</dbReference>
<dbReference type="GeneID" id="93876326"/>
<dbReference type="KEGG" id="tpa:TP_0556"/>
<dbReference type="KEGG" id="tpw:TPANIC_0556"/>
<dbReference type="eggNOG" id="COG2502">
    <property type="taxonomic scope" value="Bacteria"/>
</dbReference>
<dbReference type="HOGENOM" id="CLU_071543_0_0_12"/>
<dbReference type="OrthoDB" id="9766088at2"/>
<dbReference type="UniPathway" id="UPA00134">
    <property type="reaction ID" value="UER00194"/>
</dbReference>
<dbReference type="Proteomes" id="UP000000811">
    <property type="component" value="Chromosome"/>
</dbReference>
<dbReference type="GO" id="GO:0005829">
    <property type="term" value="C:cytosol"/>
    <property type="evidence" value="ECO:0007669"/>
    <property type="project" value="TreeGrafter"/>
</dbReference>
<dbReference type="GO" id="GO:0004071">
    <property type="term" value="F:aspartate-ammonia ligase activity"/>
    <property type="evidence" value="ECO:0007669"/>
    <property type="project" value="UniProtKB-UniRule"/>
</dbReference>
<dbReference type="GO" id="GO:0005524">
    <property type="term" value="F:ATP binding"/>
    <property type="evidence" value="ECO:0007669"/>
    <property type="project" value="UniProtKB-UniRule"/>
</dbReference>
<dbReference type="GO" id="GO:0070981">
    <property type="term" value="P:L-asparagine biosynthetic process"/>
    <property type="evidence" value="ECO:0007669"/>
    <property type="project" value="UniProtKB-UniRule"/>
</dbReference>
<dbReference type="CDD" id="cd00645">
    <property type="entry name" value="AsnA"/>
    <property type="match status" value="1"/>
</dbReference>
<dbReference type="Gene3D" id="3.30.930.10">
    <property type="entry name" value="Bira Bifunctional Protein, Domain 2"/>
    <property type="match status" value="1"/>
</dbReference>
<dbReference type="HAMAP" id="MF_00555">
    <property type="entry name" value="AsnA"/>
    <property type="match status" value="1"/>
</dbReference>
<dbReference type="InterPro" id="IPR006195">
    <property type="entry name" value="aa-tRNA-synth_II"/>
</dbReference>
<dbReference type="InterPro" id="IPR045864">
    <property type="entry name" value="aa-tRNA-synth_II/BPL/LPL"/>
</dbReference>
<dbReference type="InterPro" id="IPR004618">
    <property type="entry name" value="AsnA"/>
</dbReference>
<dbReference type="NCBIfam" id="TIGR00669">
    <property type="entry name" value="asnA"/>
    <property type="match status" value="1"/>
</dbReference>
<dbReference type="PANTHER" id="PTHR30073">
    <property type="entry name" value="ASPARTATE--AMMONIA LIGASE"/>
    <property type="match status" value="1"/>
</dbReference>
<dbReference type="PANTHER" id="PTHR30073:SF5">
    <property type="entry name" value="ASPARTATE--AMMONIA LIGASE"/>
    <property type="match status" value="1"/>
</dbReference>
<dbReference type="Pfam" id="PF03590">
    <property type="entry name" value="AsnA"/>
    <property type="match status" value="1"/>
</dbReference>
<dbReference type="PIRSF" id="PIRSF001555">
    <property type="entry name" value="Asp_ammon_ligase"/>
    <property type="match status" value="1"/>
</dbReference>
<dbReference type="SUPFAM" id="SSF55681">
    <property type="entry name" value="Class II aaRS and biotin synthetases"/>
    <property type="match status" value="1"/>
</dbReference>
<dbReference type="PROSITE" id="PS50862">
    <property type="entry name" value="AA_TRNA_LIGASE_II"/>
    <property type="match status" value="1"/>
</dbReference>
<sequence length="330" mass="36856">MEKSFILQQQGISFAKHTFTQKLMEHLGLIEVQGPLLSQVGDGIQDGLSGREKAVSVSVKQIPGTAFEVVHSLAKWKRHTLARYGFQDNEGLFVHMIALRPDEDFLDQVRSVCVDQWDWEKVVPVGSRNLAYLKDTVRKVYGALRESEVLVSERFGLRAFLPADIVFVQSEELVRRYPHLDSKGREDAICKEHGAVFLIGIGGVLSDGKPHDVRAPDYDDWTTPSEGEYKGLNGDILVWNPVLGRAFEVSSMGIRVDEGALRTQLALTGDEDSLACSWHQDLINGRLPQSIGGGIGQSRLAMLLLQRKHIGEVQASVWPRSVREEFENIL</sequence>
<feature type="chain" id="PRO_0000195897" description="Aspartate--ammonia ligase">
    <location>
        <begin position="1"/>
        <end position="330"/>
    </location>
</feature>
<organism>
    <name type="scientific">Treponema pallidum (strain Nichols)</name>
    <dbReference type="NCBI Taxonomy" id="243276"/>
    <lineage>
        <taxon>Bacteria</taxon>
        <taxon>Pseudomonadati</taxon>
        <taxon>Spirochaetota</taxon>
        <taxon>Spirochaetia</taxon>
        <taxon>Spirochaetales</taxon>
        <taxon>Treponemataceae</taxon>
        <taxon>Treponema</taxon>
    </lineage>
</organism>
<keyword id="KW-0028">Amino-acid biosynthesis</keyword>
<keyword id="KW-0061">Asparagine biosynthesis</keyword>
<keyword id="KW-0067">ATP-binding</keyword>
<keyword id="KW-0963">Cytoplasm</keyword>
<keyword id="KW-0436">Ligase</keyword>
<keyword id="KW-0547">Nucleotide-binding</keyword>
<keyword id="KW-1185">Reference proteome</keyword>
<comment type="catalytic activity">
    <reaction evidence="1">
        <text>L-aspartate + NH4(+) + ATP = L-asparagine + AMP + diphosphate + H(+)</text>
        <dbReference type="Rhea" id="RHEA:11372"/>
        <dbReference type="ChEBI" id="CHEBI:15378"/>
        <dbReference type="ChEBI" id="CHEBI:28938"/>
        <dbReference type="ChEBI" id="CHEBI:29991"/>
        <dbReference type="ChEBI" id="CHEBI:30616"/>
        <dbReference type="ChEBI" id="CHEBI:33019"/>
        <dbReference type="ChEBI" id="CHEBI:58048"/>
        <dbReference type="ChEBI" id="CHEBI:456215"/>
        <dbReference type="EC" id="6.3.1.1"/>
    </reaction>
</comment>
<comment type="pathway">
    <text evidence="1">Amino-acid biosynthesis; L-asparagine biosynthesis; L-asparagine from L-aspartate (ammonia route): step 1/1.</text>
</comment>
<comment type="subcellular location">
    <subcellularLocation>
        <location evidence="1">Cytoplasm</location>
    </subcellularLocation>
</comment>
<comment type="similarity">
    <text evidence="1">Belongs to the class-II aminoacyl-tRNA synthetase family. AsnA subfamily.</text>
</comment>
<reference key="1">
    <citation type="journal article" date="1998" name="Science">
        <title>Complete genome sequence of Treponema pallidum, the syphilis spirochete.</title>
        <authorList>
            <person name="Fraser C.M."/>
            <person name="Norris S.J."/>
            <person name="Weinstock G.M."/>
            <person name="White O."/>
            <person name="Sutton G.G."/>
            <person name="Dodson R.J."/>
            <person name="Gwinn M.L."/>
            <person name="Hickey E.K."/>
            <person name="Clayton R.A."/>
            <person name="Ketchum K.A."/>
            <person name="Sodergren E."/>
            <person name="Hardham J.M."/>
            <person name="McLeod M.P."/>
            <person name="Salzberg S.L."/>
            <person name="Peterson J.D."/>
            <person name="Khalak H.G."/>
            <person name="Richardson D.L."/>
            <person name="Howell J.K."/>
            <person name="Chidambaram M."/>
            <person name="Utterback T.R."/>
            <person name="McDonald L.A."/>
            <person name="Artiach P."/>
            <person name="Bowman C."/>
            <person name="Cotton M.D."/>
            <person name="Fujii C."/>
            <person name="Garland S.A."/>
            <person name="Hatch B."/>
            <person name="Horst K."/>
            <person name="Roberts K.M."/>
            <person name="Sandusky M."/>
            <person name="Weidman J.F."/>
            <person name="Smith H.O."/>
            <person name="Venter J.C."/>
        </authorList>
    </citation>
    <scope>NUCLEOTIDE SEQUENCE [LARGE SCALE GENOMIC DNA]</scope>
    <source>
        <strain>Nichols</strain>
    </source>
</reference>
<protein>
    <recommendedName>
        <fullName evidence="1">Aspartate--ammonia ligase</fullName>
        <ecNumber evidence="1">6.3.1.1</ecNumber>
    </recommendedName>
    <alternativeName>
        <fullName evidence="1">Asparagine synthetase A</fullName>
    </alternativeName>
</protein>
<name>ASNA_TREPA</name>
<evidence type="ECO:0000255" key="1">
    <source>
        <dbReference type="HAMAP-Rule" id="MF_00555"/>
    </source>
</evidence>
<accession>O83567</accession>
<gene>
    <name evidence="1" type="primary">asnA</name>
    <name type="ordered locus">TP_0556</name>
</gene>